<accession>Q5R372</accession>
<accession>O75059</accession>
<accession>Q3ZTR8</accession>
<accession>Q5R369</accession>
<accession>Q8IVV0</accession>
<accession>Q8N921</accession>
<accession>Q8WV78</accession>
<accession>Q9NSP8</accession>
<accession>Q9UQ19</accession>
<accession>Q9UQP5</accession>
<accession>Q9Y6Y5</accession>
<accession>Q9Y6Y6</accession>
<comment type="function">
    <text evidence="2 12">GTP-hydrolysis activating protein (GAP) for small GTPase RAB22A, converting active RAB22A-GTP to the inactive form RAB22A-GDP (PubMed:16923123). Plays a role in endocytosis and intracellular protein transport. Recruited by ANK2 to phosphatidylinositol 3-phosphate (PI3P)-positive early endosomes, where it inactivates RAB22A, and promotes polarized trafficking to the leading edge of the migrating cells. Part of the ANK2/RABGAP1L complex which is required for the polarized recycling of fibronectin receptor ITGA5 ITGB1 to the plasma membrane that enables continuous directional cell migration (By similarity).</text>
</comment>
<comment type="subunit">
    <text evidence="14">Interacts (via Rab-GAP TBC domain) with ANK2 (via death domain).</text>
</comment>
<comment type="interaction">
    <interactant intactId="EBI-2810417">
        <id>Q5R372</id>
    </interactant>
    <interactant intactId="EBI-1057545">
        <id>Q9Y3P9</id>
        <label>RABGAP1</label>
    </interactant>
    <organismsDiffer>false</organismsDiffer>
    <experiments>3</experiments>
</comment>
<comment type="interaction">
    <interactant intactId="EBI-10692254">
        <id>Q5R372-2</id>
    </interactant>
    <interactant intactId="EBI-10694291">
        <id>Q8TAL5</id>
        <label>C9orf43</label>
    </interactant>
    <organismsDiffer>false</organismsDiffer>
    <experiments>3</experiments>
</comment>
<comment type="interaction">
    <interactant intactId="EBI-10692254">
        <id>Q5R372-2</id>
    </interactant>
    <interactant intactId="EBI-1384862">
        <id>Q03112</id>
        <label>MECOM</label>
    </interactant>
    <organismsDiffer>false</organismsDiffer>
    <experiments>3</experiments>
</comment>
<comment type="interaction">
    <interactant intactId="EBI-10699389">
        <id>Q5R372-9</id>
    </interactant>
    <interactant intactId="EBI-718729">
        <id>P55212</id>
        <label>CASP6</label>
    </interactant>
    <organismsDiffer>false</organismsDiffer>
    <experiments>3</experiments>
</comment>
<comment type="interaction">
    <interactant intactId="EBI-10699389">
        <id>Q5R372-9</id>
    </interactant>
    <interactant intactId="EBI-21591415">
        <id>P13473-2</id>
        <label>LAMP2</label>
    </interactant>
    <organismsDiffer>false</organismsDiffer>
    <experiments>3</experiments>
</comment>
<comment type="interaction">
    <interactant intactId="EBI-10699389">
        <id>Q5R372-9</id>
    </interactant>
    <interactant intactId="EBI-5280197">
        <id>O75400-2</id>
        <label>PRPF40A</label>
    </interactant>
    <organismsDiffer>false</organismsDiffer>
    <experiments>3</experiments>
</comment>
<comment type="subcellular location">
    <subcellularLocation>
        <location evidence="2">Cytoplasmic vesicle</location>
    </subcellularLocation>
    <subcellularLocation>
        <location evidence="12">Early endosome</location>
    </subcellularLocation>
    <subcellularLocation>
        <location evidence="12">Golgi apparatus</location>
    </subcellularLocation>
    <text evidence="2 12">Colocalizes on endosomes partially with EEA1 (PubMed:16923123). Colocalizes and cotransports on motile vesicles with ANK2 (By similarity).</text>
</comment>
<comment type="alternative products">
    <event type="alternative splicing"/>
    <isoform>
        <id>Q5R372-1</id>
        <name evidence="7 11">1</name>
        <sequence type="displayed"/>
    </isoform>
    <isoform>
        <id>Q5R372-2</id>
        <name evidence="9 11">2</name>
        <sequence type="described" ref="VSP_052916 VSP_052919 VSP_052920"/>
    </isoform>
    <isoform>
        <id>Q5R372-3</id>
        <name evidence="11">3</name>
        <sequence type="described" ref="VSP_052917"/>
    </isoform>
    <isoform>
        <id>Q5R372-4</id>
        <name evidence="10">4</name>
        <sequence type="described" ref="VSP_052918"/>
    </isoform>
    <isoform>
        <id>Q5R372-5</id>
        <name evidence="11 16">5</name>
        <sequence type="described" ref="VSP_052915 VSP_035087 VSP_052924"/>
    </isoform>
    <isoform>
        <id>Q5R372-6</id>
        <name evidence="11 16">6</name>
        <sequence type="described" ref="VSP_052915 VSP_052921 VSP_052924"/>
    </isoform>
    <isoform>
        <id>Q5R372-7</id>
        <name evidence="11 16">7</name>
        <sequence type="described" ref="VSP_052913 VSP_052924"/>
    </isoform>
    <isoform>
        <id>Q5R372-8</id>
        <name evidence="11 15">8</name>
        <sequence type="described" ref="VSP_052914 VSP_052922 VSP_052924"/>
    </isoform>
    <isoform>
        <id>Q5R372-9</id>
        <name evidence="9">9</name>
        <sequence type="described" ref="VSP_052912 VSP_052923"/>
    </isoform>
    <isoform>
        <id>B7ZAP0-1</id>
        <name>10</name>
        <name>D</name>
        <sequence type="external"/>
    </isoform>
</comment>
<comment type="induction">
    <text evidence="6 8">Up-regulated in esophageal squamous cell carcinomas. Expression is strongly inhibited in the medial septum and hippocampus brain regions of some Alzheimer disease patients.</text>
</comment>
<comment type="domain">
    <text evidence="1">The arginine and glutamine fingers are critical for the GTPase-activating mechanism, they pull out Rab's 'switch 2' glutamine and insert in Rab's active site.</text>
</comment>
<comment type="disease" evidence="13">
    <disease id="DI-01171">
        <name>Leukemia, acute myelogenous</name>
        <acronym>AML</acronym>
        <description>A subtype of acute leukemia, a cancer of the white blood cells. AML is a malignant disease of bone marrow characterized by maturational arrest of hematopoietic precursors at an early stage of development. Clonal expansion of myeloid blasts occurs in bone marrow, blood, and other tissue. Myelogenous leukemias develop from changes in cells that normally produce neutrophils, basophils, eosinophils and monocytes.</description>
        <dbReference type="MIM" id="601626"/>
    </disease>
    <text>The gene represented in this entry may be involved in disease pathogenesis.</text>
</comment>
<comment type="disease">
    <text evidence="13">A chromosomal aberration involving RABGAP1L has been found in bone marrow cells from a child with leukemia, acute myelogenous. Translocation der(Y)t(Y;1)(q12;q25). The breakpoint at 1q25 disrupts RABGAP1L.</text>
</comment>
<comment type="sequence caution" evidence="23">
    <conflict type="erroneous initiation">
        <sequence resource="EMBL-CDS" id="BAA32316"/>
    </conflict>
</comment>
<feature type="chain" id="PRO_0000348054" description="Rab GTPase-activating protein 1-like">
    <location>
        <begin position="1"/>
        <end position="815"/>
    </location>
</feature>
<feature type="domain" description="PID" evidence="3">
    <location>
        <begin position="126"/>
        <end position="282"/>
    </location>
</feature>
<feature type="domain" description="Rab-GAP TBC" evidence="4">
    <location>
        <begin position="538"/>
        <end position="724"/>
    </location>
</feature>
<feature type="region of interest" description="Disordered" evidence="5">
    <location>
        <begin position="1"/>
        <end position="52"/>
    </location>
</feature>
<feature type="region of interest" description="Disordered" evidence="5">
    <location>
        <begin position="461"/>
        <end position="503"/>
    </location>
</feature>
<feature type="compositionally biased region" description="Polar residues" evidence="5">
    <location>
        <begin position="8"/>
        <end position="22"/>
    </location>
</feature>
<feature type="compositionally biased region" description="Basic and acidic residues" evidence="5">
    <location>
        <begin position="35"/>
        <end position="44"/>
    </location>
</feature>
<feature type="compositionally biased region" description="Acidic residues" evidence="5">
    <location>
        <begin position="482"/>
        <end position="492"/>
    </location>
</feature>
<feature type="site" description="Arginine finger" evidence="1">
    <location>
        <position position="580"/>
    </location>
</feature>
<feature type="site" description="Glutamine finger" evidence="1">
    <location>
        <position position="621"/>
    </location>
</feature>
<feature type="modified residue" description="Phosphothreonine" evidence="33">
    <location>
        <position position="471"/>
    </location>
</feature>
<feature type="modified residue" description="Phosphoserine" evidence="33">
    <location>
        <position position="480"/>
    </location>
</feature>
<feature type="modified residue" description="Phosphoserine" evidence="33">
    <location>
        <position position="490"/>
    </location>
</feature>
<feature type="splice variant" id="VSP_052912" description="In isoform 9." evidence="17 22">
    <location>
        <begin position="1"/>
        <end position="743"/>
    </location>
</feature>
<feature type="splice variant" id="VSP_052913" description="In isoform 7." evidence="19 21">
    <location>
        <begin position="1"/>
        <end position="693"/>
    </location>
</feature>
<feature type="splice variant" id="VSP_052914" description="In isoform 8." evidence="19 20">
    <location>
        <begin position="1"/>
        <end position="681"/>
    </location>
</feature>
<feature type="splice variant" id="VSP_052915" description="In isoform 5 and isoform 6." evidence="19 21">
    <location>
        <begin position="1"/>
        <end position="673"/>
    </location>
</feature>
<feature type="splice variant" id="VSP_052916" description="In isoform 2." evidence="17 19">
    <location>
        <begin position="10"/>
        <end position="46"/>
    </location>
</feature>
<feature type="splice variant" id="VSP_052917" description="In isoform 3." evidence="19 22">
    <original>F</original>
    <variation>FRLLVIPIPFEYF</variation>
    <location>
        <position position="291"/>
    </location>
</feature>
<feature type="splice variant" id="VSP_052918" description="In isoform 4." evidence="18">
    <location>
        <begin position="478"/>
        <end position="492"/>
    </location>
</feature>
<feature type="splice variant" id="VSP_052919" description="In isoform 2." evidence="17 19">
    <original>DSAQESVITRDIHRTFPAHDYFKDTGGDGQESLYKICKAYSVYDEDIGYCQGQSFLAAVLLLHMPEEQAFCV</original>
    <variation>QQMKFSLTPRQTIHLVKYEGSMKVSMTPCNQLQFDIRLDVLITYTFCFSSFPEPELYKYVLKHQLIKRLNAC</variation>
    <location>
        <begin position="571"/>
        <end position="642"/>
    </location>
</feature>
<feature type="splice variant" id="VSP_052920" description="In isoform 2." evidence="17 19">
    <location>
        <begin position="643"/>
        <end position="815"/>
    </location>
</feature>
<feature type="splice variant" id="VSP_052921" description="In isoform 6." evidence="19 21">
    <original>MQ</original>
    <variation>M</variation>
    <location>
        <begin position="674"/>
        <end position="675"/>
    </location>
</feature>
<feature type="splice variant" id="VSP_035087" description="In isoform 5." evidence="21">
    <original>Q</original>
    <variation>K</variation>
    <location>
        <position position="675"/>
    </location>
</feature>
<feature type="splice variant" id="VSP_052922" description="In isoform 8." evidence="19 20">
    <original>HSHFSDLNLEAHMYASQWFLTLFTAKFPLCMVFHIIDLLLCEGLNIIFHVALALLK</original>
    <variation>MEEGVPCPAPAAKLTPPVKKSQDMHDERSKLVNEYACRVLELLGMGHRLFVPRLLA</variation>
    <location>
        <begin position="682"/>
        <end position="737"/>
    </location>
</feature>
<feature type="splice variant" id="VSP_052923" description="In isoform 9." evidence="17 22">
    <original>LQADFEGALKFFRVQLPKRYRAEENARRLMEQACNIK</original>
    <variation>MMEEISIMVAYDAHVFSQLHDEDFLTSLVAISKPRSM</variation>
    <location>
        <begin position="744"/>
        <end position="780"/>
    </location>
</feature>
<feature type="splice variant" id="VSP_052924" description="In isoform 5, isoform 6, isoform 7 and isoform 8." evidence="19 20 21">
    <original>FVYL</original>
    <variation>RENRRLQEASMRLEQENDDLAHELVTSKIALRNDLDQAEDKADVLNKELLLTKQRLVETEEEKRKQEEETAQLKEVFRKQLEKAEYEIKKTTAIIAEYKQICSQLSTRLEKQQAASKEELEVVKGKMMACKHCSDIFSKEGALKLAATGREDQGIETDDEKDSLKKQLREMELELAQTKLQLVEAKCKIQELEHQRGALMNEIQAAKNSWFSKTLNSIKTATGTQPLQPAPVTQPPKEST</variation>
    <location>
        <begin position="812"/>
        <end position="815"/>
    </location>
</feature>
<feature type="sequence variant" id="VAR_052533" description="In dbSNP:rs7339904.">
    <original>S</original>
    <variation>G</variation>
    <location>
        <position position="277"/>
    </location>
</feature>
<feature type="sequence conflict" description="In Ref. 5; BAC04635." evidence="23" ref="5">
    <original>K</original>
    <variation>R</variation>
    <location>
        <position position="311"/>
    </location>
</feature>
<feature type="helix" evidence="34">
    <location>
        <begin position="513"/>
        <end position="521"/>
    </location>
</feature>
<feature type="helix" evidence="34">
    <location>
        <begin position="531"/>
        <end position="537"/>
    </location>
</feature>
<feature type="helix" evidence="34">
    <location>
        <begin position="541"/>
        <end position="543"/>
    </location>
</feature>
<feature type="helix" evidence="34">
    <location>
        <begin position="544"/>
        <end position="551"/>
    </location>
</feature>
<feature type="helix" evidence="34">
    <location>
        <begin position="558"/>
        <end position="567"/>
    </location>
</feature>
<feature type="helix" evidence="34">
    <location>
        <begin position="575"/>
        <end position="582"/>
    </location>
</feature>
<feature type="turn" evidence="34">
    <location>
        <begin position="590"/>
        <end position="592"/>
    </location>
</feature>
<feature type="helix" evidence="34">
    <location>
        <begin position="598"/>
        <end position="613"/>
    </location>
</feature>
<feature type="turn" evidence="34">
    <location>
        <begin position="615"/>
        <end position="617"/>
    </location>
</feature>
<feature type="helix" evidence="34">
    <location>
        <begin position="623"/>
        <end position="633"/>
    </location>
</feature>
<feature type="helix" evidence="34">
    <location>
        <begin position="636"/>
        <end position="648"/>
    </location>
</feature>
<feature type="helix" evidence="34">
    <location>
        <begin position="652"/>
        <end position="655"/>
    </location>
</feature>
<feature type="helix" evidence="34">
    <location>
        <begin position="657"/>
        <end position="677"/>
    </location>
</feature>
<feature type="helix" evidence="34">
    <location>
        <begin position="679"/>
        <end position="688"/>
    </location>
</feature>
<feature type="helix" evidence="34">
    <location>
        <begin position="692"/>
        <end position="694"/>
    </location>
</feature>
<feature type="helix" evidence="34">
    <location>
        <begin position="697"/>
        <end position="702"/>
    </location>
</feature>
<feature type="turn" evidence="34">
    <location>
        <begin position="703"/>
        <end position="707"/>
    </location>
</feature>
<feature type="helix" evidence="34">
    <location>
        <begin position="710"/>
        <end position="723"/>
    </location>
</feature>
<feature type="helix" evidence="34">
    <location>
        <begin position="727"/>
        <end position="738"/>
    </location>
</feature>
<feature type="helix" evidence="34">
    <location>
        <begin position="740"/>
        <end position="744"/>
    </location>
</feature>
<feature type="helix" evidence="34">
    <location>
        <begin position="748"/>
        <end position="756"/>
    </location>
</feature>
<feature type="helix" evidence="34">
    <location>
        <begin position="758"/>
        <end position="761"/>
    </location>
</feature>
<feature type="helix" evidence="34">
    <location>
        <begin position="766"/>
        <end position="778"/>
    </location>
</feature>
<feature type="helix" evidence="34">
    <location>
        <begin position="783"/>
        <end position="796"/>
    </location>
</feature>
<protein>
    <recommendedName>
        <fullName>Rab GTPase-activating protein 1-like</fullName>
    </recommendedName>
</protein>
<keyword id="KW-0002">3D-structure</keyword>
<keyword id="KW-0025">Alternative splicing</keyword>
<keyword id="KW-0160">Chromosomal rearrangement</keyword>
<keyword id="KW-0968">Cytoplasmic vesicle</keyword>
<keyword id="KW-0254">Endocytosis</keyword>
<keyword id="KW-0967">Endosome</keyword>
<keyword id="KW-0333">Golgi apparatus</keyword>
<keyword id="KW-0343">GTPase activation</keyword>
<keyword id="KW-0597">Phosphoprotein</keyword>
<keyword id="KW-0653">Protein transport</keyword>
<keyword id="KW-1267">Proteomics identification</keyword>
<keyword id="KW-1185">Reference proteome</keyword>
<keyword id="KW-0813">Transport</keyword>
<proteinExistence type="evidence at protein level"/>
<name>RBG1L_HUMAN</name>
<sequence>MEVRASLQKVSGSSDSVATMNSEEFVLVPQYADDNSTKHEEKPQLKIVSNGDEQLEKAMEEILRDSEKRPSSLLVDCQSSSEISDHSFGDIPASQTNKPSLQLILDPSNTEISTPRPSSPGGLPEEDSVLFNKLTYLGCMKVSSPRNEVEALRAMATMKSSSQYPFPVTLYVPNVPEGSVRIIDQSSNVEIASFPIYKVLFCARGHDGTTESNCFAFTESSHGSEEFQIHVFSCEIKEAVSRILYSFCTAFKRSSRQVSDVKDSVIPTPDSDVFTFSVSLEVKEDDGKGNFSPVPKDRDKFYFKLKQGIEKKVVITVQQLSNKELAIERCFGMLLSPGRNVKNSDMHLLDMESMGKSYDGRAYVITGMWNPNAPVFLALNEETPKDKQVYMTVAVDMVVTEVVEPVRFLLETVVRVYPANERFWYFSRKTFTETFFMRLKQSEGKGHTNAGDAIYEVVSLQRESDKEEPVTPTSGGGPMSPQDDEAEEESDNELSSGTGDVSKDCPEKILYSWGELLGKWHSNLGARPKGLSTLVKSGVPEALRAEVWQLLAGCHDNQAMLDRYRILITKDSAQESVITRDIHRTFPAHDYFKDTGGDGQESLYKICKAYSVYDEDIGYCQGQSFLAAVLLLHMPEEQAFCVLVKIMYDYGLRDLYRNNFEDLHCKFYQLERLMQEQLPDLHSHFSDLNLEAHMYASQWFLTLFTAKFPLCMVFHIIDLLLCEGLNIIFHVALALLKTSKEDLLQADFEGALKFFRVQLPKRYRAEENARRLMEQACNIKVPTKKLKKYEKEYQTMRESQLQQEDPMDRYKFVYL</sequence>
<gene>
    <name evidence="32" type="primary">RABGAP1L</name>
    <name evidence="27" type="synonym">HHL</name>
    <name evidence="28" type="synonym">KIAA0471</name>
</gene>
<evidence type="ECO:0000250" key="1"/>
<evidence type="ECO:0000250" key="2">
    <source>
        <dbReference type="UniProtKB" id="A6H6A9"/>
    </source>
</evidence>
<evidence type="ECO:0000255" key="3">
    <source>
        <dbReference type="PROSITE-ProRule" id="PRU00148"/>
    </source>
</evidence>
<evidence type="ECO:0000255" key="4">
    <source>
        <dbReference type="PROSITE-ProRule" id="PRU00163"/>
    </source>
</evidence>
<evidence type="ECO:0000256" key="5">
    <source>
        <dbReference type="SAM" id="MobiDB-lite"/>
    </source>
</evidence>
<evidence type="ECO:0000269" key="6">
    <source>
    </source>
</evidence>
<evidence type="ECO:0000269" key="7">
    <source>
    </source>
</evidence>
<evidence type="ECO:0000269" key="8">
    <source>
    </source>
</evidence>
<evidence type="ECO:0000269" key="9">
    <source>
    </source>
</evidence>
<evidence type="ECO:0000269" key="10">
    <source>
    </source>
</evidence>
<evidence type="ECO:0000269" key="11">
    <source>
    </source>
</evidence>
<evidence type="ECO:0000269" key="12">
    <source>
    </source>
</evidence>
<evidence type="ECO:0000269" key="13">
    <source>
    </source>
</evidence>
<evidence type="ECO:0000269" key="14">
    <source>
    </source>
</evidence>
<evidence type="ECO:0000269" key="15">
    <source>
    </source>
</evidence>
<evidence type="ECO:0000269" key="16">
    <source ref="1"/>
</evidence>
<evidence type="ECO:0000303" key="17">
    <source>
    </source>
</evidence>
<evidence type="ECO:0000303" key="18">
    <source>
    </source>
</evidence>
<evidence type="ECO:0000303" key="19">
    <source>
    </source>
</evidence>
<evidence type="ECO:0000303" key="20">
    <source>
    </source>
</evidence>
<evidence type="ECO:0000303" key="21">
    <source ref="1"/>
</evidence>
<evidence type="ECO:0000303" key="22">
    <source ref="4"/>
</evidence>
<evidence type="ECO:0000305" key="23"/>
<evidence type="ECO:0000312" key="24">
    <source>
        <dbReference type="EMBL" id="AAH12094.1"/>
    </source>
</evidence>
<evidence type="ECO:0000312" key="25">
    <source>
        <dbReference type="EMBL" id="AAH18630.2"/>
    </source>
</evidence>
<evidence type="ECO:0000312" key="26">
    <source>
        <dbReference type="EMBL" id="AAH41888.1"/>
    </source>
</evidence>
<evidence type="ECO:0000312" key="27">
    <source>
        <dbReference type="EMBL" id="AAQ76819.1"/>
    </source>
</evidence>
<evidence type="ECO:0000312" key="28">
    <source>
        <dbReference type="EMBL" id="BAA32316.2"/>
    </source>
</evidence>
<evidence type="ECO:0000312" key="29">
    <source>
        <dbReference type="EMBL" id="BAA77332.1"/>
    </source>
</evidence>
<evidence type="ECO:0000312" key="30">
    <source>
        <dbReference type="EMBL" id="BAC04635.1"/>
    </source>
</evidence>
<evidence type="ECO:0000312" key="31">
    <source>
        <dbReference type="EMBL" id="CAH70225.1"/>
    </source>
</evidence>
<evidence type="ECO:0000312" key="32">
    <source>
        <dbReference type="EMBL" id="CAI18937.1"/>
    </source>
</evidence>
<evidence type="ECO:0007744" key="33">
    <source>
    </source>
</evidence>
<evidence type="ECO:0007829" key="34">
    <source>
        <dbReference type="PDB" id="3HZJ"/>
    </source>
</evidence>
<reference evidence="23 29" key="1">
    <citation type="submission" date="1998-11" db="EMBL/GenBank/DDBJ databases">
        <title>Genes preferentially expressed in precancerous lesion of HCC.</title>
        <authorList>
            <person name="Aihara T."/>
            <person name="Yasuo M."/>
            <person name="Kumiko K."/>
            <person name="Sasaki Y."/>
            <person name="Imaoka S."/>
            <person name="Monden M."/>
            <person name="Nakamura Y."/>
        </authorList>
    </citation>
    <scope>NUCLEOTIDE SEQUENCE [MRNA] (ISOFORMS 5; 6 AND 7)</scope>
    <source>
        <tissue evidence="29">Testis</tissue>
    </source>
</reference>
<reference evidence="23 28" key="2">
    <citation type="journal article" date="1997" name="DNA Res.">
        <title>Characterization of cDNA clones in size-fractionated cDNA libraries from human brain.</title>
        <authorList>
            <person name="Seki N."/>
            <person name="Ohira M."/>
            <person name="Nagase T."/>
            <person name="Ishikawa K."/>
            <person name="Miyajima N."/>
            <person name="Nakajima D."/>
            <person name="Nomura N."/>
            <person name="Ohara O."/>
        </authorList>
    </citation>
    <scope>NUCLEOTIDE SEQUENCE [LARGE SCALE MRNA] (ISOFORM 8)</scope>
    <source>
        <tissue evidence="28">Brain</tissue>
    </source>
</reference>
<reference evidence="23 29" key="3">
    <citation type="submission" date="2004-01" db="EMBL/GenBank/DDBJ databases">
        <authorList>
            <person name="Ohara O."/>
        </authorList>
    </citation>
    <scope>SEQUENCE REVISION</scope>
</reference>
<reference evidence="23 29" key="4">
    <citation type="submission" date="2000-02" db="EMBL/GenBank/DDBJ databases">
        <authorList>
            <person name="Rhodes S."/>
            <person name="Huckle E."/>
        </authorList>
    </citation>
    <scope>NUCLEOTIDE SEQUENCE [LARGE SCALE MRNA] (ISOFORM 9)</scope>
    <scope>NUCLEOTIDE SEQUENCE [LARGE SCALE MRNA] OF 1-570 (ISOFORM 3)</scope>
</reference>
<reference evidence="23 30" key="5">
    <citation type="journal article" date="2004" name="Nat. Genet.">
        <title>Complete sequencing and characterization of 21,243 full-length human cDNAs.</title>
        <authorList>
            <person name="Ota T."/>
            <person name="Suzuki Y."/>
            <person name="Nishikawa T."/>
            <person name="Otsuki T."/>
            <person name="Sugiyama T."/>
            <person name="Irie R."/>
            <person name="Wakamatsu A."/>
            <person name="Hayashi K."/>
            <person name="Sato H."/>
            <person name="Nagai K."/>
            <person name="Kimura K."/>
            <person name="Makita H."/>
            <person name="Sekine M."/>
            <person name="Obayashi M."/>
            <person name="Nishi T."/>
            <person name="Shibahara T."/>
            <person name="Tanaka T."/>
            <person name="Ishii S."/>
            <person name="Yamamoto J."/>
            <person name="Saito K."/>
            <person name="Kawai Y."/>
            <person name="Isono Y."/>
            <person name="Nakamura Y."/>
            <person name="Nagahari K."/>
            <person name="Murakami K."/>
            <person name="Yasuda T."/>
            <person name="Iwayanagi T."/>
            <person name="Wagatsuma M."/>
            <person name="Shiratori A."/>
            <person name="Sudo H."/>
            <person name="Hosoiri T."/>
            <person name="Kaku Y."/>
            <person name="Kodaira H."/>
            <person name="Kondo H."/>
            <person name="Sugawara M."/>
            <person name="Takahashi M."/>
            <person name="Kanda K."/>
            <person name="Yokoi T."/>
            <person name="Furuya T."/>
            <person name="Kikkawa E."/>
            <person name="Omura Y."/>
            <person name="Abe K."/>
            <person name="Kamihara K."/>
            <person name="Katsuta N."/>
            <person name="Sato K."/>
            <person name="Tanikawa M."/>
            <person name="Yamazaki M."/>
            <person name="Ninomiya K."/>
            <person name="Ishibashi T."/>
            <person name="Yamashita H."/>
            <person name="Murakawa K."/>
            <person name="Fujimori K."/>
            <person name="Tanai H."/>
            <person name="Kimata M."/>
            <person name="Watanabe M."/>
            <person name="Hiraoka S."/>
            <person name="Chiba Y."/>
            <person name="Ishida S."/>
            <person name="Ono Y."/>
            <person name="Takiguchi S."/>
            <person name="Watanabe S."/>
            <person name="Yosida M."/>
            <person name="Hotuta T."/>
            <person name="Kusano J."/>
            <person name="Kanehori K."/>
            <person name="Takahashi-Fujii A."/>
            <person name="Hara H."/>
            <person name="Tanase T.-O."/>
            <person name="Nomura Y."/>
            <person name="Togiya S."/>
            <person name="Komai F."/>
            <person name="Hara R."/>
            <person name="Takeuchi K."/>
            <person name="Arita M."/>
            <person name="Imose N."/>
            <person name="Musashino K."/>
            <person name="Yuuki H."/>
            <person name="Oshima A."/>
            <person name="Sasaki N."/>
            <person name="Aotsuka S."/>
            <person name="Yoshikawa Y."/>
            <person name="Matsunawa H."/>
            <person name="Ichihara T."/>
            <person name="Shiohata N."/>
            <person name="Sano S."/>
            <person name="Moriya S."/>
            <person name="Momiyama H."/>
            <person name="Satoh N."/>
            <person name="Takami S."/>
            <person name="Terashima Y."/>
            <person name="Suzuki O."/>
            <person name="Nakagawa S."/>
            <person name="Senoh A."/>
            <person name="Mizoguchi H."/>
            <person name="Goto Y."/>
            <person name="Shimizu F."/>
            <person name="Wakebe H."/>
            <person name="Hishigaki H."/>
            <person name="Watanabe T."/>
            <person name="Sugiyama A."/>
            <person name="Takemoto M."/>
            <person name="Kawakami B."/>
            <person name="Yamazaki M."/>
            <person name="Watanabe K."/>
            <person name="Kumagai A."/>
            <person name="Itakura S."/>
            <person name="Fukuzumi Y."/>
            <person name="Fujimori Y."/>
            <person name="Komiyama M."/>
            <person name="Tashiro H."/>
            <person name="Tanigami A."/>
            <person name="Fujiwara T."/>
            <person name="Ono T."/>
            <person name="Yamada K."/>
            <person name="Fujii Y."/>
            <person name="Ozaki K."/>
            <person name="Hirao M."/>
            <person name="Ohmori Y."/>
            <person name="Kawabata A."/>
            <person name="Hikiji T."/>
            <person name="Kobatake N."/>
            <person name="Inagaki H."/>
            <person name="Ikema Y."/>
            <person name="Okamoto S."/>
            <person name="Okitani R."/>
            <person name="Kawakami T."/>
            <person name="Noguchi S."/>
            <person name="Itoh T."/>
            <person name="Shigeta K."/>
            <person name="Senba T."/>
            <person name="Matsumura K."/>
            <person name="Nakajima Y."/>
            <person name="Mizuno T."/>
            <person name="Morinaga M."/>
            <person name="Sasaki M."/>
            <person name="Togashi T."/>
            <person name="Oyama M."/>
            <person name="Hata H."/>
            <person name="Watanabe M."/>
            <person name="Komatsu T."/>
            <person name="Mizushima-Sugano J."/>
            <person name="Satoh T."/>
            <person name="Shirai Y."/>
            <person name="Takahashi Y."/>
            <person name="Nakagawa K."/>
            <person name="Okumura K."/>
            <person name="Nagase T."/>
            <person name="Nomura N."/>
            <person name="Kikuchi H."/>
            <person name="Masuho Y."/>
            <person name="Yamashita R."/>
            <person name="Nakai K."/>
            <person name="Yada T."/>
            <person name="Nakamura Y."/>
            <person name="Ohara O."/>
            <person name="Isogai T."/>
            <person name="Sugano S."/>
        </authorList>
    </citation>
    <scope>NUCLEOTIDE SEQUENCE [LARGE SCALE MRNA] (ISOFORM 1)</scope>
    <source>
        <tissue evidence="30">Chondrocyte</tissue>
    </source>
</reference>
<reference evidence="31" key="6">
    <citation type="journal article" date="2006" name="Nature">
        <title>The DNA sequence and biological annotation of human chromosome 1.</title>
        <authorList>
            <person name="Gregory S.G."/>
            <person name="Barlow K.F."/>
            <person name="McLay K.E."/>
            <person name="Kaul R."/>
            <person name="Swarbreck D."/>
            <person name="Dunham A."/>
            <person name="Scott C.E."/>
            <person name="Howe K.L."/>
            <person name="Woodfine K."/>
            <person name="Spencer C.C.A."/>
            <person name="Jones M.C."/>
            <person name="Gillson C."/>
            <person name="Searle S."/>
            <person name="Zhou Y."/>
            <person name="Kokocinski F."/>
            <person name="McDonald L."/>
            <person name="Evans R."/>
            <person name="Phillips K."/>
            <person name="Atkinson A."/>
            <person name="Cooper R."/>
            <person name="Jones C."/>
            <person name="Hall R.E."/>
            <person name="Andrews T.D."/>
            <person name="Lloyd C."/>
            <person name="Ainscough R."/>
            <person name="Almeida J.P."/>
            <person name="Ambrose K.D."/>
            <person name="Anderson F."/>
            <person name="Andrew R.W."/>
            <person name="Ashwell R.I.S."/>
            <person name="Aubin K."/>
            <person name="Babbage A.K."/>
            <person name="Bagguley C.L."/>
            <person name="Bailey J."/>
            <person name="Beasley H."/>
            <person name="Bethel G."/>
            <person name="Bird C.P."/>
            <person name="Bray-Allen S."/>
            <person name="Brown J.Y."/>
            <person name="Brown A.J."/>
            <person name="Buckley D."/>
            <person name="Burton J."/>
            <person name="Bye J."/>
            <person name="Carder C."/>
            <person name="Chapman J.C."/>
            <person name="Clark S.Y."/>
            <person name="Clarke G."/>
            <person name="Clee C."/>
            <person name="Cobley V."/>
            <person name="Collier R.E."/>
            <person name="Corby N."/>
            <person name="Coville G.J."/>
            <person name="Davies J."/>
            <person name="Deadman R."/>
            <person name="Dunn M."/>
            <person name="Earthrowl M."/>
            <person name="Ellington A.G."/>
            <person name="Errington H."/>
            <person name="Frankish A."/>
            <person name="Frankland J."/>
            <person name="French L."/>
            <person name="Garner P."/>
            <person name="Garnett J."/>
            <person name="Gay L."/>
            <person name="Ghori M.R.J."/>
            <person name="Gibson R."/>
            <person name="Gilby L.M."/>
            <person name="Gillett W."/>
            <person name="Glithero R.J."/>
            <person name="Grafham D.V."/>
            <person name="Griffiths C."/>
            <person name="Griffiths-Jones S."/>
            <person name="Grocock R."/>
            <person name="Hammond S."/>
            <person name="Harrison E.S.I."/>
            <person name="Hart E."/>
            <person name="Haugen E."/>
            <person name="Heath P.D."/>
            <person name="Holmes S."/>
            <person name="Holt K."/>
            <person name="Howden P.J."/>
            <person name="Hunt A.R."/>
            <person name="Hunt S.E."/>
            <person name="Hunter G."/>
            <person name="Isherwood J."/>
            <person name="James R."/>
            <person name="Johnson C."/>
            <person name="Johnson D."/>
            <person name="Joy A."/>
            <person name="Kay M."/>
            <person name="Kershaw J.K."/>
            <person name="Kibukawa M."/>
            <person name="Kimberley A.M."/>
            <person name="King A."/>
            <person name="Knights A.J."/>
            <person name="Lad H."/>
            <person name="Laird G."/>
            <person name="Lawlor S."/>
            <person name="Leongamornlert D.A."/>
            <person name="Lloyd D.M."/>
            <person name="Loveland J."/>
            <person name="Lovell J."/>
            <person name="Lush M.J."/>
            <person name="Lyne R."/>
            <person name="Martin S."/>
            <person name="Mashreghi-Mohammadi M."/>
            <person name="Matthews L."/>
            <person name="Matthews N.S.W."/>
            <person name="McLaren S."/>
            <person name="Milne S."/>
            <person name="Mistry S."/>
            <person name="Moore M.J.F."/>
            <person name="Nickerson T."/>
            <person name="O'Dell C.N."/>
            <person name="Oliver K."/>
            <person name="Palmeiri A."/>
            <person name="Palmer S.A."/>
            <person name="Parker A."/>
            <person name="Patel D."/>
            <person name="Pearce A.V."/>
            <person name="Peck A.I."/>
            <person name="Pelan S."/>
            <person name="Phelps K."/>
            <person name="Phillimore B.J."/>
            <person name="Plumb R."/>
            <person name="Rajan J."/>
            <person name="Raymond C."/>
            <person name="Rouse G."/>
            <person name="Saenphimmachak C."/>
            <person name="Sehra H.K."/>
            <person name="Sheridan E."/>
            <person name="Shownkeen R."/>
            <person name="Sims S."/>
            <person name="Skuce C.D."/>
            <person name="Smith M."/>
            <person name="Steward C."/>
            <person name="Subramanian S."/>
            <person name="Sycamore N."/>
            <person name="Tracey A."/>
            <person name="Tromans A."/>
            <person name="Van Helmond Z."/>
            <person name="Wall M."/>
            <person name="Wallis J.M."/>
            <person name="White S."/>
            <person name="Whitehead S.L."/>
            <person name="Wilkinson J.E."/>
            <person name="Willey D.L."/>
            <person name="Williams H."/>
            <person name="Wilming L."/>
            <person name="Wray P.W."/>
            <person name="Wu Z."/>
            <person name="Coulson A."/>
            <person name="Vaudin M."/>
            <person name="Sulston J.E."/>
            <person name="Durbin R.M."/>
            <person name="Hubbard T."/>
            <person name="Wooster R."/>
            <person name="Dunham I."/>
            <person name="Carter N.P."/>
            <person name="McVean G."/>
            <person name="Ross M.T."/>
            <person name="Harrow J."/>
            <person name="Olson M.V."/>
            <person name="Beck S."/>
            <person name="Rogers J."/>
            <person name="Bentley D.R."/>
        </authorList>
    </citation>
    <scope>NUCLEOTIDE SEQUENCE [LARGE SCALE GENOMIC DNA]</scope>
</reference>
<reference evidence="23 29" key="7">
    <citation type="submission" date="2005-07" db="EMBL/GenBank/DDBJ databases">
        <authorList>
            <person name="Mural R.J."/>
            <person name="Istrail S."/>
            <person name="Sutton G.G."/>
            <person name="Florea L."/>
            <person name="Halpern A.L."/>
            <person name="Mobarry C.M."/>
            <person name="Lippert R."/>
            <person name="Walenz B."/>
            <person name="Shatkay H."/>
            <person name="Dew I."/>
            <person name="Miller J.R."/>
            <person name="Flanigan M.J."/>
            <person name="Edwards N.J."/>
            <person name="Bolanos R."/>
            <person name="Fasulo D."/>
            <person name="Halldorsson B.V."/>
            <person name="Hannenhalli S."/>
            <person name="Turner R."/>
            <person name="Yooseph S."/>
            <person name="Lu F."/>
            <person name="Nusskern D.R."/>
            <person name="Shue B.C."/>
            <person name="Zheng X.H."/>
            <person name="Zhong F."/>
            <person name="Delcher A.L."/>
            <person name="Huson D.H."/>
            <person name="Kravitz S.A."/>
            <person name="Mouchard L."/>
            <person name="Reinert K."/>
            <person name="Remington K.A."/>
            <person name="Clark A.G."/>
            <person name="Waterman M.S."/>
            <person name="Eichler E.E."/>
            <person name="Adams M.D."/>
            <person name="Hunkapiller M.W."/>
            <person name="Myers E.W."/>
            <person name="Venter J.C."/>
        </authorList>
    </citation>
    <scope>NUCLEOTIDE SEQUENCE [LARGE SCALE GENOMIC DNA]</scope>
</reference>
<reference evidence="23 26" key="8">
    <citation type="journal article" date="2004" name="Genome Res.">
        <title>The status, quality, and expansion of the NIH full-length cDNA project: the Mammalian Gene Collection (MGC).</title>
        <authorList>
            <consortium name="The MGC Project Team"/>
        </authorList>
    </citation>
    <scope>NUCLEOTIDE SEQUENCE [LARGE SCALE MRNA] (ISOFORMS 2 AND 9)</scope>
    <scope>NUCLEOTIDE SEQUENCE [LARGE SCALE MRNA] OF 676-815 (ISOFORMS 1/3/4)</scope>
    <source>
        <tissue evidence="25">B-cell</tissue>
        <tissue evidence="24">Colon</tissue>
        <tissue evidence="26">Testis</tissue>
    </source>
</reference>
<reference evidence="23 27" key="9">
    <citation type="journal article" date="2006" name="BMC Genomics">
        <title>NovelFam3000 -- uncharacterized human protein domains conserved across model organisms.</title>
        <authorList>
            <person name="Kemmer D."/>
            <person name="Podowski R.M."/>
            <person name="Arenillas D."/>
            <person name="Lim J."/>
            <person name="Hodges E."/>
            <person name="Roth P."/>
            <person name="Sonnhammer E.L.L."/>
            <person name="Hoeoeg C."/>
            <person name="Wasserman W.W."/>
        </authorList>
    </citation>
    <scope>NUCLEOTIDE SEQUENCE [MRNA] OF 333-815 (ISOFORM 4)</scope>
</reference>
<reference evidence="23" key="10">
    <citation type="journal article" date="2003" name="Genomics">
        <title>Transcriptional gene expression profile of human esophageal squamous cell carcinoma.</title>
        <authorList>
            <person name="Sharma R."/>
            <person name="Samantaray S."/>
            <person name="Shukla N.K."/>
            <person name="Ralhan R."/>
        </authorList>
    </citation>
    <scope>INDUCTION</scope>
</reference>
<reference evidence="23" key="11">
    <citation type="journal article" date="2004" name="Hum. Mol. Genet.">
        <title>Reduced KIAA0471 mRNA expression in Alzheimer's patients: a new candidate gene product linked to the disease?</title>
        <authorList>
            <person name="de Yebra L."/>
            <person name="Adroer R."/>
            <person name="de Gregorio-Rocasolano N."/>
            <person name="Blesa R."/>
            <person name="Trullas R."/>
            <person name="Mahy N."/>
        </authorList>
    </citation>
    <scope>INDUCTION</scope>
</reference>
<reference key="12">
    <citation type="journal article" date="2006" name="Genes Cells">
        <title>Screening for target Rabs of TBC (Tre-2/Bub2/Cdc16) domain-containing proteins based on their Rab-binding activity.</title>
        <authorList>
            <person name="Itoh T."/>
            <person name="Satoh M."/>
            <person name="Kanno E."/>
            <person name="Fukuda M."/>
        </authorList>
    </citation>
    <scope>FUNCTION</scope>
    <scope>SUBCELLULAR LOCATION</scope>
    <scope>PHYLOGENETIC ANALYSIS</scope>
</reference>
<reference key="13">
    <citation type="journal article" date="2008" name="Proc. Natl. Acad. Sci. U.S.A.">
        <title>A quantitative atlas of mitotic phosphorylation.</title>
        <authorList>
            <person name="Dephoure N."/>
            <person name="Zhou C."/>
            <person name="Villen J."/>
            <person name="Beausoleil S.A."/>
            <person name="Bakalarski C.E."/>
            <person name="Elledge S.J."/>
            <person name="Gygi S.P."/>
        </authorList>
    </citation>
    <scope>PHOSPHORYLATION [LARGE SCALE ANALYSIS] AT THR-471; SER-480 AND SER-490</scope>
    <scope>IDENTIFICATION BY MASS SPECTROMETRY [LARGE SCALE ANALYSIS]</scope>
    <source>
        <tissue>Cervix carcinoma</tissue>
    </source>
</reference>
<reference key="14">
    <citation type="journal article" date="2009" name="Virchows Arch.">
        <title>RABGAP1L gene rearrangement resulting from a der(Y)t(Y;1)(q12;q25) in acute myeloid leukemia arising in a child with Klinefelter syndrome.</title>
        <authorList>
            <person name="Roberti M.C."/>
            <person name="La Starza R."/>
            <person name="Surace C."/>
            <person name="Sirleto P."/>
            <person name="Pinto R.M."/>
            <person name="Pierini V."/>
            <person name="Crescenzi B."/>
            <person name="Mecucci C."/>
            <person name="Angioni A."/>
        </authorList>
    </citation>
    <scope>INVOLVEMENT IN AML</scope>
    <scope>CHROMOSOMAL REARRANGEMENT</scope>
</reference>
<reference key="15">
    <citation type="journal article" date="2010" name="Sci. Signal.">
        <title>Quantitative phosphoproteomics reveals widespread full phosphorylation site occupancy during mitosis.</title>
        <authorList>
            <person name="Olsen J.V."/>
            <person name="Vermeulen M."/>
            <person name="Santamaria A."/>
            <person name="Kumar C."/>
            <person name="Miller M.L."/>
            <person name="Jensen L.J."/>
            <person name="Gnad F."/>
            <person name="Cox J."/>
            <person name="Jensen T.S."/>
            <person name="Nigg E.A."/>
            <person name="Brunak S."/>
            <person name="Mann M."/>
        </authorList>
    </citation>
    <scope>IDENTIFICATION BY MASS SPECTROMETRY [LARGE SCALE ANALYSIS]</scope>
    <source>
        <tissue>Cervix carcinoma</tissue>
    </source>
</reference>
<reference key="16">
    <citation type="journal article" date="2011" name="BMC Syst. Biol.">
        <title>Initial characterization of the human central proteome.</title>
        <authorList>
            <person name="Burkard T.R."/>
            <person name="Planyavsky M."/>
            <person name="Kaupe I."/>
            <person name="Breitwieser F.P."/>
            <person name="Buerckstuemmer T."/>
            <person name="Bennett K.L."/>
            <person name="Superti-Furga G."/>
            <person name="Colinge J."/>
        </authorList>
    </citation>
    <scope>IDENTIFICATION BY MASS SPECTROMETRY [LARGE SCALE ANALYSIS]</scope>
</reference>
<reference key="17">
    <citation type="journal article" date="2013" name="J. Proteome Res.">
        <title>Toward a comprehensive characterization of a human cancer cell phosphoproteome.</title>
        <authorList>
            <person name="Zhou H."/>
            <person name="Di Palma S."/>
            <person name="Preisinger C."/>
            <person name="Peng M."/>
            <person name="Polat A.N."/>
            <person name="Heck A.J."/>
            <person name="Mohammed S."/>
        </authorList>
    </citation>
    <scope>IDENTIFICATION BY MASS SPECTROMETRY [LARGE SCALE ANALYSIS]</scope>
    <source>
        <tissue>Erythroleukemia</tissue>
    </source>
</reference>
<reference key="18">
    <citation type="journal article" date="2016" name="Elife">
        <title>Ankyrin-B is a PI3P effector that promotes polarized alpha5beta1-integrin recycling via recruiting RabGAP1L to early endosomes.</title>
        <authorList>
            <person name="Qu F."/>
            <person name="Lorenzo D.N."/>
            <person name="King S.J."/>
            <person name="Brooks R."/>
            <person name="Bear J.E."/>
            <person name="Bennett V."/>
        </authorList>
    </citation>
    <scope>INTERACTION WITH ANK2</scope>
</reference>
<reference evidence="23 29" key="19">
    <citation type="submission" date="2009-07" db="PDB data bank">
        <title>Crystal structure of the RabGAP domain of the RABGAP1L protein.</title>
        <authorList>
            <consortium name="Structural genomics consortium (SGC)"/>
        </authorList>
    </citation>
    <scope>X-RAY CRYSTALLOGRAPHY (2.3 ANGSTROMS) OF 507-815</scope>
</reference>
<dbReference type="EMBL" id="AB019489">
    <property type="protein sequence ID" value="BAA77330.1"/>
    <property type="molecule type" value="mRNA"/>
</dbReference>
<dbReference type="EMBL" id="AB019491">
    <property type="protein sequence ID" value="BAA77332.1"/>
    <property type="molecule type" value="mRNA"/>
</dbReference>
<dbReference type="EMBL" id="AB019492">
    <property type="protein sequence ID" value="BAA77333.2"/>
    <property type="molecule type" value="mRNA"/>
</dbReference>
<dbReference type="EMBL" id="AB019493">
    <property type="protein sequence ID" value="BAA77334.1"/>
    <property type="molecule type" value="mRNA"/>
</dbReference>
<dbReference type="EMBL" id="AB007940">
    <property type="protein sequence ID" value="BAA32316.2"/>
    <property type="status" value="ALT_INIT"/>
    <property type="molecule type" value="mRNA"/>
</dbReference>
<dbReference type="EMBL" id="AL049702">
    <property type="protein sequence ID" value="CAB41266.1"/>
    <property type="molecule type" value="mRNA"/>
</dbReference>
<dbReference type="EMBL" id="AL157958">
    <property type="protein sequence ID" value="CAB76100.1"/>
    <property type="molecule type" value="mRNA"/>
</dbReference>
<dbReference type="EMBL" id="AK095838">
    <property type="protein sequence ID" value="BAC04635.1"/>
    <property type="molecule type" value="mRNA"/>
</dbReference>
<dbReference type="EMBL" id="AL021069">
    <property type="protein sequence ID" value="CAI23486.1"/>
    <property type="molecule type" value="Genomic_DNA"/>
</dbReference>
<dbReference type="EMBL" id="AL022171">
    <property type="protein sequence ID" value="CAI23486.1"/>
    <property type="status" value="JOINED"/>
    <property type="molecule type" value="Genomic_DNA"/>
</dbReference>
<dbReference type="EMBL" id="AL022400">
    <property type="protein sequence ID" value="CAI23486.1"/>
    <property type="status" value="JOINED"/>
    <property type="molecule type" value="Genomic_DNA"/>
</dbReference>
<dbReference type="EMBL" id="AL031286">
    <property type="protein sequence ID" value="CAI23486.1"/>
    <property type="status" value="JOINED"/>
    <property type="molecule type" value="Genomic_DNA"/>
</dbReference>
<dbReference type="EMBL" id="AL022171">
    <property type="protein sequence ID" value="CAI20382.1"/>
    <property type="molecule type" value="Genomic_DNA"/>
</dbReference>
<dbReference type="EMBL" id="AL022400">
    <property type="protein sequence ID" value="CAI20382.1"/>
    <property type="status" value="JOINED"/>
    <property type="molecule type" value="Genomic_DNA"/>
</dbReference>
<dbReference type="EMBL" id="AL031286">
    <property type="protein sequence ID" value="CAI20382.1"/>
    <property type="status" value="JOINED"/>
    <property type="molecule type" value="Genomic_DNA"/>
</dbReference>
<dbReference type="EMBL" id="AL022171">
    <property type="protein sequence ID" value="CAI20383.1"/>
    <property type="molecule type" value="Genomic_DNA"/>
</dbReference>
<dbReference type="EMBL" id="AL021069">
    <property type="protein sequence ID" value="CAI20383.1"/>
    <property type="status" value="JOINED"/>
    <property type="molecule type" value="Genomic_DNA"/>
</dbReference>
<dbReference type="EMBL" id="AL022400">
    <property type="protein sequence ID" value="CAI20383.1"/>
    <property type="status" value="JOINED"/>
    <property type="molecule type" value="Genomic_DNA"/>
</dbReference>
<dbReference type="EMBL" id="AL031286">
    <property type="protein sequence ID" value="CAI20383.1"/>
    <property type="status" value="JOINED"/>
    <property type="molecule type" value="Genomic_DNA"/>
</dbReference>
<dbReference type="EMBL" id="AL022171">
    <property type="protein sequence ID" value="CAI20384.1"/>
    <property type="molecule type" value="Genomic_DNA"/>
</dbReference>
<dbReference type="EMBL" id="AL022400">
    <property type="protein sequence ID" value="CAI20384.1"/>
    <property type="status" value="JOINED"/>
    <property type="molecule type" value="Genomic_DNA"/>
</dbReference>
<dbReference type="EMBL" id="AL031286">
    <property type="protein sequence ID" value="CAI20384.1"/>
    <property type="status" value="JOINED"/>
    <property type="molecule type" value="Genomic_DNA"/>
</dbReference>
<dbReference type="EMBL" id="AL136377">
    <property type="protein sequence ID" value="CAI20384.1"/>
    <property type="status" value="JOINED"/>
    <property type="molecule type" value="Genomic_DNA"/>
</dbReference>
<dbReference type="EMBL" id="AL161671">
    <property type="protein sequence ID" value="CAI20384.1"/>
    <property type="status" value="JOINED"/>
    <property type="molecule type" value="Genomic_DNA"/>
</dbReference>
<dbReference type="EMBL" id="AL591108">
    <property type="protein sequence ID" value="CAI20384.1"/>
    <property type="status" value="JOINED"/>
    <property type="molecule type" value="Genomic_DNA"/>
</dbReference>
<dbReference type="EMBL" id="Z99127">
    <property type="protein sequence ID" value="CAI20384.1"/>
    <property type="status" value="JOINED"/>
    <property type="molecule type" value="Genomic_DNA"/>
</dbReference>
<dbReference type="EMBL" id="AL022400">
    <property type="protein sequence ID" value="CAI22876.1"/>
    <property type="molecule type" value="Genomic_DNA"/>
</dbReference>
<dbReference type="EMBL" id="AL022171">
    <property type="protein sequence ID" value="CAI22876.1"/>
    <property type="status" value="JOINED"/>
    <property type="molecule type" value="Genomic_DNA"/>
</dbReference>
<dbReference type="EMBL" id="AL031286">
    <property type="protein sequence ID" value="CAI22876.1"/>
    <property type="status" value="JOINED"/>
    <property type="molecule type" value="Genomic_DNA"/>
</dbReference>
<dbReference type="EMBL" id="AL022400">
    <property type="protein sequence ID" value="CAI22877.1"/>
    <property type="molecule type" value="Genomic_DNA"/>
</dbReference>
<dbReference type="EMBL" id="AL021069">
    <property type="protein sequence ID" value="CAI22877.1"/>
    <property type="status" value="JOINED"/>
    <property type="molecule type" value="Genomic_DNA"/>
</dbReference>
<dbReference type="EMBL" id="AL022171">
    <property type="protein sequence ID" value="CAI22877.1"/>
    <property type="status" value="JOINED"/>
    <property type="molecule type" value="Genomic_DNA"/>
</dbReference>
<dbReference type="EMBL" id="AL031286">
    <property type="protein sequence ID" value="CAI22877.1"/>
    <property type="status" value="JOINED"/>
    <property type="molecule type" value="Genomic_DNA"/>
</dbReference>
<dbReference type="EMBL" id="AL022400">
    <property type="protein sequence ID" value="CAI22878.1"/>
    <property type="molecule type" value="Genomic_DNA"/>
</dbReference>
<dbReference type="EMBL" id="AL022171">
    <property type="protein sequence ID" value="CAI22878.1"/>
    <property type="status" value="JOINED"/>
    <property type="molecule type" value="Genomic_DNA"/>
</dbReference>
<dbReference type="EMBL" id="AL031286">
    <property type="protein sequence ID" value="CAI22878.1"/>
    <property type="status" value="JOINED"/>
    <property type="molecule type" value="Genomic_DNA"/>
</dbReference>
<dbReference type="EMBL" id="AL136377">
    <property type="protein sequence ID" value="CAI22878.1"/>
    <property type="status" value="JOINED"/>
    <property type="molecule type" value="Genomic_DNA"/>
</dbReference>
<dbReference type="EMBL" id="AL161671">
    <property type="protein sequence ID" value="CAI22878.1"/>
    <property type="status" value="JOINED"/>
    <property type="molecule type" value="Genomic_DNA"/>
</dbReference>
<dbReference type="EMBL" id="AL591108">
    <property type="protein sequence ID" value="CAI22878.1"/>
    <property type="status" value="JOINED"/>
    <property type="molecule type" value="Genomic_DNA"/>
</dbReference>
<dbReference type="EMBL" id="Z99127">
    <property type="protein sequence ID" value="CAI22878.1"/>
    <property type="status" value="JOINED"/>
    <property type="molecule type" value="Genomic_DNA"/>
</dbReference>
<dbReference type="EMBL" id="AL031286">
    <property type="protein sequence ID" value="CAI22380.1"/>
    <property type="molecule type" value="Genomic_DNA"/>
</dbReference>
<dbReference type="EMBL" id="AL022171">
    <property type="protein sequence ID" value="CAI22380.1"/>
    <property type="status" value="JOINED"/>
    <property type="molecule type" value="Genomic_DNA"/>
</dbReference>
<dbReference type="EMBL" id="AL022400">
    <property type="protein sequence ID" value="CAI22380.1"/>
    <property type="status" value="JOINED"/>
    <property type="molecule type" value="Genomic_DNA"/>
</dbReference>
<dbReference type="EMBL" id="AL031286">
    <property type="protein sequence ID" value="CAI22381.1"/>
    <property type="molecule type" value="Genomic_DNA"/>
</dbReference>
<dbReference type="EMBL" id="AL021069">
    <property type="protein sequence ID" value="CAI22381.1"/>
    <property type="status" value="JOINED"/>
    <property type="molecule type" value="Genomic_DNA"/>
</dbReference>
<dbReference type="EMBL" id="AL022171">
    <property type="protein sequence ID" value="CAI22381.1"/>
    <property type="status" value="JOINED"/>
    <property type="molecule type" value="Genomic_DNA"/>
</dbReference>
<dbReference type="EMBL" id="AL022400">
    <property type="protein sequence ID" value="CAI22381.1"/>
    <property type="status" value="JOINED"/>
    <property type="molecule type" value="Genomic_DNA"/>
</dbReference>
<dbReference type="EMBL" id="AL031286">
    <property type="protein sequence ID" value="CAI22382.1"/>
    <property type="molecule type" value="Genomic_DNA"/>
</dbReference>
<dbReference type="EMBL" id="AL022171">
    <property type="protein sequence ID" value="CAI22382.1"/>
    <property type="status" value="JOINED"/>
    <property type="molecule type" value="Genomic_DNA"/>
</dbReference>
<dbReference type="EMBL" id="AL022400">
    <property type="protein sequence ID" value="CAI22382.1"/>
    <property type="status" value="JOINED"/>
    <property type="molecule type" value="Genomic_DNA"/>
</dbReference>
<dbReference type="EMBL" id="AL136377">
    <property type="protein sequence ID" value="CAI22382.1"/>
    <property type="status" value="JOINED"/>
    <property type="molecule type" value="Genomic_DNA"/>
</dbReference>
<dbReference type="EMBL" id="AL161671">
    <property type="protein sequence ID" value="CAI22382.1"/>
    <property type="status" value="JOINED"/>
    <property type="molecule type" value="Genomic_DNA"/>
</dbReference>
<dbReference type="EMBL" id="AL591108">
    <property type="protein sequence ID" value="CAI22382.1"/>
    <property type="status" value="JOINED"/>
    <property type="molecule type" value="Genomic_DNA"/>
</dbReference>
<dbReference type="EMBL" id="Z99127">
    <property type="protein sequence ID" value="CAI22382.1"/>
    <property type="status" value="JOINED"/>
    <property type="molecule type" value="Genomic_DNA"/>
</dbReference>
<dbReference type="EMBL" id="AL136377">
    <property type="protein sequence ID" value="CAI22932.1"/>
    <property type="molecule type" value="Genomic_DNA"/>
</dbReference>
<dbReference type="EMBL" id="AL161671">
    <property type="protein sequence ID" value="CAI22932.1"/>
    <property type="status" value="JOINED"/>
    <property type="molecule type" value="Genomic_DNA"/>
</dbReference>
<dbReference type="EMBL" id="Z99127">
    <property type="protein sequence ID" value="CAI22932.1"/>
    <property type="status" value="JOINED"/>
    <property type="molecule type" value="Genomic_DNA"/>
</dbReference>
<dbReference type="EMBL" id="AL136377">
    <property type="protein sequence ID" value="CAI22933.1"/>
    <property type="molecule type" value="Genomic_DNA"/>
</dbReference>
<dbReference type="EMBL" id="AL161671">
    <property type="protein sequence ID" value="CAI22933.1"/>
    <property type="status" value="JOINED"/>
    <property type="molecule type" value="Genomic_DNA"/>
</dbReference>
<dbReference type="EMBL" id="Z99127">
    <property type="protein sequence ID" value="CAI22933.1"/>
    <property type="status" value="JOINED"/>
    <property type="molecule type" value="Genomic_DNA"/>
</dbReference>
<dbReference type="EMBL" id="AL136377">
    <property type="protein sequence ID" value="CAI22934.1"/>
    <property type="molecule type" value="Genomic_DNA"/>
</dbReference>
<dbReference type="EMBL" id="AL161671">
    <property type="protein sequence ID" value="CAI22934.1"/>
    <property type="status" value="JOINED"/>
    <property type="molecule type" value="Genomic_DNA"/>
</dbReference>
<dbReference type="EMBL" id="Z99127">
    <property type="protein sequence ID" value="CAI22934.1"/>
    <property type="status" value="JOINED"/>
    <property type="molecule type" value="Genomic_DNA"/>
</dbReference>
<dbReference type="EMBL" id="AL136377">
    <property type="protein sequence ID" value="CAI22935.1"/>
    <property type="molecule type" value="Genomic_DNA"/>
</dbReference>
<dbReference type="EMBL" id="AL022171">
    <property type="protein sequence ID" value="CAI22935.1"/>
    <property type="status" value="JOINED"/>
    <property type="molecule type" value="Genomic_DNA"/>
</dbReference>
<dbReference type="EMBL" id="AL022400">
    <property type="protein sequence ID" value="CAI22935.1"/>
    <property type="status" value="JOINED"/>
    <property type="molecule type" value="Genomic_DNA"/>
</dbReference>
<dbReference type="EMBL" id="AL031286">
    <property type="protein sequence ID" value="CAI22935.1"/>
    <property type="status" value="JOINED"/>
    <property type="molecule type" value="Genomic_DNA"/>
</dbReference>
<dbReference type="EMBL" id="AL161671">
    <property type="protein sequence ID" value="CAI22935.1"/>
    <property type="status" value="JOINED"/>
    <property type="molecule type" value="Genomic_DNA"/>
</dbReference>
<dbReference type="EMBL" id="AL591108">
    <property type="protein sequence ID" value="CAI22935.1"/>
    <property type="status" value="JOINED"/>
    <property type="molecule type" value="Genomic_DNA"/>
</dbReference>
<dbReference type="EMBL" id="Z99127">
    <property type="protein sequence ID" value="CAI22935.1"/>
    <property type="status" value="JOINED"/>
    <property type="molecule type" value="Genomic_DNA"/>
</dbReference>
<dbReference type="EMBL" id="AL161671">
    <property type="protein sequence ID" value="CAI16277.1"/>
    <property type="molecule type" value="Genomic_DNA"/>
</dbReference>
<dbReference type="EMBL" id="Z99127">
    <property type="protein sequence ID" value="CAI16277.1"/>
    <property type="status" value="JOINED"/>
    <property type="molecule type" value="Genomic_DNA"/>
</dbReference>
<dbReference type="EMBL" id="AL161671">
    <property type="protein sequence ID" value="CAI16278.1"/>
    <property type="molecule type" value="Genomic_DNA"/>
</dbReference>
<dbReference type="EMBL" id="AL136377">
    <property type="protein sequence ID" value="CAI16278.1"/>
    <property type="status" value="JOINED"/>
    <property type="molecule type" value="Genomic_DNA"/>
</dbReference>
<dbReference type="EMBL" id="Z99127">
    <property type="protein sequence ID" value="CAI16278.1"/>
    <property type="status" value="JOINED"/>
    <property type="molecule type" value="Genomic_DNA"/>
</dbReference>
<dbReference type="EMBL" id="AL161671">
    <property type="protein sequence ID" value="CAI16279.1"/>
    <property type="molecule type" value="Genomic_DNA"/>
</dbReference>
<dbReference type="EMBL" id="AL136377">
    <property type="protein sequence ID" value="CAI16279.1"/>
    <property type="status" value="JOINED"/>
    <property type="molecule type" value="Genomic_DNA"/>
</dbReference>
<dbReference type="EMBL" id="Z99127">
    <property type="protein sequence ID" value="CAI16279.1"/>
    <property type="status" value="JOINED"/>
    <property type="molecule type" value="Genomic_DNA"/>
</dbReference>
<dbReference type="EMBL" id="AL161671">
    <property type="protein sequence ID" value="CAI16280.1"/>
    <property type="molecule type" value="Genomic_DNA"/>
</dbReference>
<dbReference type="EMBL" id="AL136377">
    <property type="protein sequence ID" value="CAI16280.1"/>
    <property type="status" value="JOINED"/>
    <property type="molecule type" value="Genomic_DNA"/>
</dbReference>
<dbReference type="EMBL" id="Z99127">
    <property type="protein sequence ID" value="CAI16280.1"/>
    <property type="status" value="JOINED"/>
    <property type="molecule type" value="Genomic_DNA"/>
</dbReference>
<dbReference type="EMBL" id="AL161671">
    <property type="protein sequence ID" value="CAI16281.1"/>
    <property type="molecule type" value="Genomic_DNA"/>
</dbReference>
<dbReference type="EMBL" id="AL022171">
    <property type="protein sequence ID" value="CAI16281.1"/>
    <property type="status" value="JOINED"/>
    <property type="molecule type" value="Genomic_DNA"/>
</dbReference>
<dbReference type="EMBL" id="AL022400">
    <property type="protein sequence ID" value="CAI16281.1"/>
    <property type="status" value="JOINED"/>
    <property type="molecule type" value="Genomic_DNA"/>
</dbReference>
<dbReference type="EMBL" id="AL031286">
    <property type="protein sequence ID" value="CAI16281.1"/>
    <property type="status" value="JOINED"/>
    <property type="molecule type" value="Genomic_DNA"/>
</dbReference>
<dbReference type="EMBL" id="AL136377">
    <property type="protein sequence ID" value="CAI16281.1"/>
    <property type="status" value="JOINED"/>
    <property type="molecule type" value="Genomic_DNA"/>
</dbReference>
<dbReference type="EMBL" id="AL591108">
    <property type="protein sequence ID" value="CAI16281.1"/>
    <property type="status" value="JOINED"/>
    <property type="molecule type" value="Genomic_DNA"/>
</dbReference>
<dbReference type="EMBL" id="Z99127">
    <property type="protein sequence ID" value="CAI16281.1"/>
    <property type="status" value="JOINED"/>
    <property type="molecule type" value="Genomic_DNA"/>
</dbReference>
<dbReference type="EMBL" id="AL591108">
    <property type="protein sequence ID" value="CAH70225.1"/>
    <property type="molecule type" value="Genomic_DNA"/>
</dbReference>
<dbReference type="EMBL" id="AL022171">
    <property type="protein sequence ID" value="CAH70225.1"/>
    <property type="status" value="JOINED"/>
    <property type="molecule type" value="Genomic_DNA"/>
</dbReference>
<dbReference type="EMBL" id="AL022400">
    <property type="protein sequence ID" value="CAH70225.1"/>
    <property type="status" value="JOINED"/>
    <property type="molecule type" value="Genomic_DNA"/>
</dbReference>
<dbReference type="EMBL" id="AL031286">
    <property type="protein sequence ID" value="CAH70225.1"/>
    <property type="status" value="JOINED"/>
    <property type="molecule type" value="Genomic_DNA"/>
</dbReference>
<dbReference type="EMBL" id="AL136377">
    <property type="protein sequence ID" value="CAH70225.1"/>
    <property type="status" value="JOINED"/>
    <property type="molecule type" value="Genomic_DNA"/>
</dbReference>
<dbReference type="EMBL" id="AL161671">
    <property type="protein sequence ID" value="CAH70225.1"/>
    <property type="status" value="JOINED"/>
    <property type="molecule type" value="Genomic_DNA"/>
</dbReference>
<dbReference type="EMBL" id="Z99127">
    <property type="protein sequence ID" value="CAH70225.1"/>
    <property type="status" value="JOINED"/>
    <property type="molecule type" value="Genomic_DNA"/>
</dbReference>
<dbReference type="EMBL" id="Z99127">
    <property type="protein sequence ID" value="CAI18933.1"/>
    <property type="molecule type" value="Genomic_DNA"/>
</dbReference>
<dbReference type="EMBL" id="AL161671">
    <property type="protein sequence ID" value="CAI18933.1"/>
    <property type="status" value="JOINED"/>
    <property type="molecule type" value="Genomic_DNA"/>
</dbReference>
<dbReference type="EMBL" id="Z99127">
    <property type="protein sequence ID" value="CAI18934.1"/>
    <property type="molecule type" value="Genomic_DNA"/>
</dbReference>
<dbReference type="EMBL" id="AL136377">
    <property type="protein sequence ID" value="CAI18934.1"/>
    <property type="status" value="JOINED"/>
    <property type="molecule type" value="Genomic_DNA"/>
</dbReference>
<dbReference type="EMBL" id="AL161671">
    <property type="protein sequence ID" value="CAI18934.1"/>
    <property type="status" value="JOINED"/>
    <property type="molecule type" value="Genomic_DNA"/>
</dbReference>
<dbReference type="EMBL" id="Z99127">
    <property type="protein sequence ID" value="CAI18935.1"/>
    <property type="molecule type" value="Genomic_DNA"/>
</dbReference>
<dbReference type="EMBL" id="AL136377">
    <property type="protein sequence ID" value="CAI18935.1"/>
    <property type="status" value="JOINED"/>
    <property type="molecule type" value="Genomic_DNA"/>
</dbReference>
<dbReference type="EMBL" id="AL161671">
    <property type="protein sequence ID" value="CAI18935.1"/>
    <property type="status" value="JOINED"/>
    <property type="molecule type" value="Genomic_DNA"/>
</dbReference>
<dbReference type="EMBL" id="Z99127">
    <property type="protein sequence ID" value="CAI18936.1"/>
    <property type="molecule type" value="Genomic_DNA"/>
</dbReference>
<dbReference type="EMBL" id="AL136377">
    <property type="protein sequence ID" value="CAI18936.1"/>
    <property type="status" value="JOINED"/>
    <property type="molecule type" value="Genomic_DNA"/>
</dbReference>
<dbReference type="EMBL" id="AL161671">
    <property type="protein sequence ID" value="CAI18936.1"/>
    <property type="status" value="JOINED"/>
    <property type="molecule type" value="Genomic_DNA"/>
</dbReference>
<dbReference type="EMBL" id="Z99127">
    <property type="protein sequence ID" value="CAI18937.1"/>
    <property type="molecule type" value="Genomic_DNA"/>
</dbReference>
<dbReference type="EMBL" id="AL022171">
    <property type="protein sequence ID" value="CAI18937.1"/>
    <property type="status" value="JOINED"/>
    <property type="molecule type" value="Genomic_DNA"/>
</dbReference>
<dbReference type="EMBL" id="AL022400">
    <property type="protein sequence ID" value="CAI18937.1"/>
    <property type="status" value="JOINED"/>
    <property type="molecule type" value="Genomic_DNA"/>
</dbReference>
<dbReference type="EMBL" id="AL031286">
    <property type="protein sequence ID" value="CAI18937.1"/>
    <property type="status" value="JOINED"/>
    <property type="molecule type" value="Genomic_DNA"/>
</dbReference>
<dbReference type="EMBL" id="AL136377">
    <property type="protein sequence ID" value="CAI18937.1"/>
    <property type="status" value="JOINED"/>
    <property type="molecule type" value="Genomic_DNA"/>
</dbReference>
<dbReference type="EMBL" id="AL161671">
    <property type="protein sequence ID" value="CAI18937.1"/>
    <property type="status" value="JOINED"/>
    <property type="molecule type" value="Genomic_DNA"/>
</dbReference>
<dbReference type="EMBL" id="AL591108">
    <property type="protein sequence ID" value="CAI18937.1"/>
    <property type="status" value="JOINED"/>
    <property type="molecule type" value="Genomic_DNA"/>
</dbReference>
<dbReference type="EMBL" id="CH471067">
    <property type="protein sequence ID" value="EAW90977.1"/>
    <property type="molecule type" value="Genomic_DNA"/>
</dbReference>
<dbReference type="EMBL" id="CH471067">
    <property type="protein sequence ID" value="EAW90979.1"/>
    <property type="molecule type" value="Genomic_DNA"/>
</dbReference>
<dbReference type="EMBL" id="BC012094">
    <property type="protein sequence ID" value="AAH12094.1"/>
    <property type="molecule type" value="mRNA"/>
</dbReference>
<dbReference type="EMBL" id="BC018630">
    <property type="protein sequence ID" value="AAH18630.2"/>
    <property type="molecule type" value="mRNA"/>
</dbReference>
<dbReference type="EMBL" id="BC041888">
    <property type="protein sequence ID" value="AAH41888.1"/>
    <property type="molecule type" value="mRNA"/>
</dbReference>
<dbReference type="EMBL" id="AY364260">
    <property type="protein sequence ID" value="AAQ76819.1"/>
    <property type="molecule type" value="mRNA"/>
</dbReference>
<dbReference type="CCDS" id="CCDS1314.1">
    <molecule id="Q5R372-1"/>
</dbReference>
<dbReference type="CCDS" id="CCDS41437.1">
    <molecule id="Q5R372-9"/>
</dbReference>
<dbReference type="CCDS" id="CCDS58046.1">
    <molecule id="Q5R372-8"/>
</dbReference>
<dbReference type="CCDS" id="CCDS91110.1">
    <molecule id="Q5R372-2"/>
</dbReference>
<dbReference type="CCDS" id="CCDS91113.1">
    <molecule id="Q5R372-5"/>
</dbReference>
<dbReference type="CCDS" id="CCDS91115.1">
    <molecule id="Q5R372-7"/>
</dbReference>
<dbReference type="RefSeq" id="NP_001030307.1">
    <molecule id="Q5R372-9"/>
    <property type="nucleotide sequence ID" value="NM_001035230.3"/>
</dbReference>
<dbReference type="RefSeq" id="NP_001230692.1">
    <molecule id="Q5R372-9"/>
    <property type="nucleotide sequence ID" value="NM_001243763.2"/>
</dbReference>
<dbReference type="RefSeq" id="NP_001230694.1">
    <molecule id="Q5R372-8"/>
    <property type="nucleotide sequence ID" value="NM_001243765.2"/>
</dbReference>
<dbReference type="RefSeq" id="NP_001353374.1">
    <molecule id="Q5R372-2"/>
    <property type="nucleotide sequence ID" value="NM_001366445.1"/>
</dbReference>
<dbReference type="RefSeq" id="NP_001353379.1">
    <molecule id="Q5R372-7"/>
    <property type="nucleotide sequence ID" value="NM_001366450.1"/>
</dbReference>
<dbReference type="RefSeq" id="NP_001353381.1">
    <molecule id="Q5R372-5"/>
    <property type="nucleotide sequence ID" value="NM_001366452.1"/>
</dbReference>
<dbReference type="RefSeq" id="NP_055672.3">
    <molecule id="Q5R372-1"/>
    <property type="nucleotide sequence ID" value="NM_014857.4"/>
</dbReference>
<dbReference type="RefSeq" id="XP_047292006.1">
    <molecule id="Q5R372-1"/>
    <property type="nucleotide sequence ID" value="XM_047436050.1"/>
</dbReference>
<dbReference type="RefSeq" id="XP_047292012.1">
    <molecule id="Q5R372-6"/>
    <property type="nucleotide sequence ID" value="XM_047436056.1"/>
</dbReference>
<dbReference type="RefSeq" id="XP_047292013.1">
    <molecule id="Q5R372-7"/>
    <property type="nucleotide sequence ID" value="XM_047436057.1"/>
</dbReference>
<dbReference type="RefSeq" id="XP_054195907.1">
    <molecule id="Q5R372-1"/>
    <property type="nucleotide sequence ID" value="XM_054339932.1"/>
</dbReference>
<dbReference type="RefSeq" id="XP_054195908.1">
    <molecule id="Q5R372-6"/>
    <property type="nucleotide sequence ID" value="XM_054339933.1"/>
</dbReference>
<dbReference type="RefSeq" id="XP_054195909.1">
    <molecule id="Q5R372-7"/>
    <property type="nucleotide sequence ID" value="XM_054339934.1"/>
</dbReference>
<dbReference type="PDB" id="3HZJ">
    <property type="method" value="X-ray"/>
    <property type="resolution" value="2.30 A"/>
    <property type="chains" value="A/B/C=507-815"/>
</dbReference>
<dbReference type="PDBsum" id="3HZJ"/>
<dbReference type="SMR" id="Q5R372"/>
<dbReference type="BioGRID" id="115239">
    <property type="interactions" value="139"/>
</dbReference>
<dbReference type="FunCoup" id="Q5R372">
    <property type="interactions" value="3226"/>
</dbReference>
<dbReference type="IntAct" id="Q5R372">
    <property type="interactions" value="55"/>
</dbReference>
<dbReference type="STRING" id="9606.ENSP00000251507"/>
<dbReference type="GlyGen" id="Q5R372">
    <property type="glycosylation" value="2 sites, 1 O-linked glycan (1 site)"/>
</dbReference>
<dbReference type="iPTMnet" id="Q5R372"/>
<dbReference type="MetOSite" id="Q5R372"/>
<dbReference type="PhosphoSitePlus" id="Q5R372"/>
<dbReference type="BioMuta" id="RABGAP1L"/>
<dbReference type="DMDM" id="205829393"/>
<dbReference type="jPOST" id="Q5R372"/>
<dbReference type="MassIVE" id="Q5R372"/>
<dbReference type="PaxDb" id="9606-ENSP00000251507"/>
<dbReference type="PeptideAtlas" id="Q5R372"/>
<dbReference type="ProteomicsDB" id="63709">
    <molecule id="Q5R372-1"/>
</dbReference>
<dbReference type="ProteomicsDB" id="63710">
    <molecule id="Q5R372-2"/>
</dbReference>
<dbReference type="ProteomicsDB" id="63711">
    <molecule id="Q5R372-3"/>
</dbReference>
<dbReference type="ProteomicsDB" id="63712">
    <molecule id="Q5R372-4"/>
</dbReference>
<dbReference type="ProteomicsDB" id="63713">
    <molecule id="Q5R372-5"/>
</dbReference>
<dbReference type="ProteomicsDB" id="63714">
    <molecule id="Q5R372-6"/>
</dbReference>
<dbReference type="ProteomicsDB" id="63715">
    <molecule id="Q5R372-7"/>
</dbReference>
<dbReference type="ProteomicsDB" id="63716">
    <molecule id="Q5R372-8"/>
</dbReference>
<dbReference type="ProteomicsDB" id="63717">
    <molecule id="Q5R372-9"/>
</dbReference>
<dbReference type="Pumba" id="Q5R372"/>
<dbReference type="Antibodypedia" id="34402">
    <property type="antibodies" value="77 antibodies from 20 providers"/>
</dbReference>
<dbReference type="DNASU" id="9910"/>
<dbReference type="Ensembl" id="ENST00000251507.8">
    <molecule id="Q5R372-1"/>
    <property type="protein sequence ID" value="ENSP00000251507.4"/>
    <property type="gene ID" value="ENSG00000152061.24"/>
</dbReference>
<dbReference type="Ensembl" id="ENST00000325589.9">
    <molecule id="Q5R372-7"/>
    <property type="protein sequence ID" value="ENSP00000318603.5"/>
    <property type="gene ID" value="ENSG00000152061.24"/>
</dbReference>
<dbReference type="Ensembl" id="ENST00000347255.6">
    <molecule id="Q5R372-5"/>
    <property type="protein sequence ID" value="ENSP00000281844.5"/>
    <property type="gene ID" value="ENSG00000152061.24"/>
</dbReference>
<dbReference type="Ensembl" id="ENST00000357444.10">
    <molecule id="Q5R372-2"/>
    <property type="protein sequence ID" value="ENSP00000350027.6"/>
    <property type="gene ID" value="ENSG00000152061.24"/>
</dbReference>
<dbReference type="Ensembl" id="ENST00000367687.5">
    <molecule id="Q5R372-6"/>
    <property type="protein sequence ID" value="ENSP00000356660.1"/>
    <property type="gene ID" value="ENSG00000152061.24"/>
</dbReference>
<dbReference type="Ensembl" id="ENST00000478442.5">
    <molecule id="Q5R372-9"/>
    <property type="protein sequence ID" value="ENSP00000434600.1"/>
    <property type="gene ID" value="ENSG00000152061.24"/>
</dbReference>
<dbReference type="Ensembl" id="ENST00000486220.5">
    <molecule id="Q5R372-9"/>
    <property type="protein sequence ID" value="ENSP00000432490.1"/>
    <property type="gene ID" value="ENSG00000152061.24"/>
</dbReference>
<dbReference type="Ensembl" id="ENST00000489615.5">
    <molecule id="Q5R372-8"/>
    <property type="protein sequence ID" value="ENSP00000420660.1"/>
    <property type="gene ID" value="ENSG00000152061.24"/>
</dbReference>
<dbReference type="GeneID" id="9910"/>
<dbReference type="UCSC" id="uc001gjw.4">
    <molecule id="Q5R372-1"/>
    <property type="organism name" value="human"/>
</dbReference>
<dbReference type="AGR" id="HGNC:24663"/>
<dbReference type="CTD" id="9910"/>
<dbReference type="DisGeNET" id="9910"/>
<dbReference type="GeneCards" id="RABGAP1L"/>
<dbReference type="HGNC" id="HGNC:24663">
    <property type="gene designation" value="RABGAP1L"/>
</dbReference>
<dbReference type="HPA" id="ENSG00000152061">
    <property type="expression patterns" value="Tissue enhanced (heart)"/>
</dbReference>
<dbReference type="MIM" id="601626">
    <property type="type" value="phenotype"/>
</dbReference>
<dbReference type="MIM" id="609238">
    <property type="type" value="gene"/>
</dbReference>
<dbReference type="neXtProt" id="NX_Q5R372"/>
<dbReference type="OpenTargets" id="ENSG00000152061"/>
<dbReference type="PharmGKB" id="PA134940645"/>
<dbReference type="VEuPathDB" id="HostDB:ENSG00000152061"/>
<dbReference type="eggNOG" id="KOG1102">
    <property type="taxonomic scope" value="Eukaryota"/>
</dbReference>
<dbReference type="GeneTree" id="ENSGT00940000154611"/>
<dbReference type="HOGENOM" id="CLU_007394_1_1_1"/>
<dbReference type="InParanoid" id="Q5R372"/>
<dbReference type="OMA" id="XSDNELS"/>
<dbReference type="OrthoDB" id="295078at2759"/>
<dbReference type="PAN-GO" id="Q5R372">
    <property type="GO annotations" value="2 GO annotations based on evolutionary models"/>
</dbReference>
<dbReference type="PhylomeDB" id="Q5R372"/>
<dbReference type="TreeFam" id="TF317184"/>
<dbReference type="PathwayCommons" id="Q5R372"/>
<dbReference type="SignaLink" id="Q5R372"/>
<dbReference type="BioGRID-ORCS" id="9910">
    <property type="hits" value="20 hits in 1155 CRISPR screens"/>
</dbReference>
<dbReference type="ChiTaRS" id="RABGAP1L">
    <property type="organism name" value="human"/>
</dbReference>
<dbReference type="EvolutionaryTrace" id="Q5R372"/>
<dbReference type="GenomeRNAi" id="9910"/>
<dbReference type="Pharos" id="Q5R372">
    <property type="development level" value="Tbio"/>
</dbReference>
<dbReference type="Proteomes" id="UP000005640">
    <property type="component" value="Chromosome 1"/>
</dbReference>
<dbReference type="RNAct" id="Q5R372">
    <property type="molecule type" value="protein"/>
</dbReference>
<dbReference type="Bgee" id="ENSG00000152061">
    <property type="expression patterns" value="Expressed in calcaneal tendon and 204 other cell types or tissues"/>
</dbReference>
<dbReference type="ExpressionAtlas" id="Q5R372">
    <property type="expression patterns" value="baseline and differential"/>
</dbReference>
<dbReference type="GO" id="GO:0005769">
    <property type="term" value="C:early endosome"/>
    <property type="evidence" value="ECO:0000314"/>
    <property type="project" value="MGI"/>
</dbReference>
<dbReference type="GO" id="GO:0005794">
    <property type="term" value="C:Golgi apparatus"/>
    <property type="evidence" value="ECO:0000314"/>
    <property type="project" value="MGI"/>
</dbReference>
<dbReference type="GO" id="GO:0005634">
    <property type="term" value="C:nucleus"/>
    <property type="evidence" value="ECO:0000314"/>
    <property type="project" value="MGI"/>
</dbReference>
<dbReference type="GO" id="GO:0005096">
    <property type="term" value="F:GTPase activator activity"/>
    <property type="evidence" value="ECO:0000314"/>
    <property type="project" value="MGI"/>
</dbReference>
<dbReference type="GO" id="GO:0031267">
    <property type="term" value="F:small GTPase binding"/>
    <property type="evidence" value="ECO:0000314"/>
    <property type="project" value="BHF-UCL"/>
</dbReference>
<dbReference type="GO" id="GO:0006897">
    <property type="term" value="P:endocytosis"/>
    <property type="evidence" value="ECO:0007669"/>
    <property type="project" value="UniProtKB-KW"/>
</dbReference>
<dbReference type="GO" id="GO:0015031">
    <property type="term" value="P:protein transport"/>
    <property type="evidence" value="ECO:0007669"/>
    <property type="project" value="UniProtKB-KW"/>
</dbReference>
<dbReference type="GO" id="GO:0032880">
    <property type="term" value="P:regulation of protein localization"/>
    <property type="evidence" value="ECO:0000314"/>
    <property type="project" value="MGI"/>
</dbReference>
<dbReference type="CDD" id="cd01211">
    <property type="entry name" value="PTB_Rab6GAP"/>
    <property type="match status" value="1"/>
</dbReference>
<dbReference type="FunFam" id="1.10.10.750:FF:000004">
    <property type="entry name" value="Putative rab gtpase-activating protein 1"/>
    <property type="match status" value="1"/>
</dbReference>
<dbReference type="FunFam" id="1.10.472.80:FF:000007">
    <property type="entry name" value="Rab GTPase-activating protein 1 isoform X1"/>
    <property type="match status" value="1"/>
</dbReference>
<dbReference type="FunFam" id="2.30.29.30:FF:000202">
    <property type="entry name" value="rab GTPase-activating protein 1-like isoform X1"/>
    <property type="match status" value="1"/>
</dbReference>
<dbReference type="FunFam" id="1.10.8.270:FF:000001">
    <property type="entry name" value="TBC1 domain family member 1"/>
    <property type="match status" value="1"/>
</dbReference>
<dbReference type="Gene3D" id="2.30.29.30">
    <property type="entry name" value="Pleckstrin-homology domain (PH domain)/Phosphotyrosine-binding domain (PTB)"/>
    <property type="match status" value="1"/>
</dbReference>
<dbReference type="Gene3D" id="1.10.8.270">
    <property type="entry name" value="putative rabgap domain of human tbc1 domain family member 14 like domains"/>
    <property type="match status" value="1"/>
</dbReference>
<dbReference type="Gene3D" id="1.10.10.750">
    <property type="entry name" value="Ypt/Rab-GAP domain of gyp1p, domain 1"/>
    <property type="match status" value="1"/>
</dbReference>
<dbReference type="Gene3D" id="1.10.472.80">
    <property type="entry name" value="Ypt/Rab-GAP domain of gyp1p, domain 3"/>
    <property type="match status" value="1"/>
</dbReference>
<dbReference type="InterPro" id="IPR022164">
    <property type="entry name" value="Kinesin-like"/>
</dbReference>
<dbReference type="InterPro" id="IPR011993">
    <property type="entry name" value="PH-like_dom_sf"/>
</dbReference>
<dbReference type="InterPro" id="IPR006020">
    <property type="entry name" value="PTB/PI_dom"/>
</dbReference>
<dbReference type="InterPro" id="IPR000195">
    <property type="entry name" value="Rab-GAP-TBC_dom"/>
</dbReference>
<dbReference type="InterPro" id="IPR035969">
    <property type="entry name" value="Rab-GAP_TBC_sf"/>
</dbReference>
<dbReference type="InterPro" id="IPR050302">
    <property type="entry name" value="Rab_GAP_TBC_domain"/>
</dbReference>
<dbReference type="PANTHER" id="PTHR47219">
    <property type="entry name" value="RAB GTPASE-ACTIVATING PROTEIN 1-LIKE"/>
    <property type="match status" value="1"/>
</dbReference>
<dbReference type="PANTHER" id="PTHR47219:SF7">
    <property type="entry name" value="RAB GTPASE-ACTIVATING PROTEIN 1-LIKE"/>
    <property type="match status" value="1"/>
</dbReference>
<dbReference type="Pfam" id="PF12473">
    <property type="entry name" value="DUF3694"/>
    <property type="match status" value="1"/>
</dbReference>
<dbReference type="Pfam" id="PF00640">
    <property type="entry name" value="PID"/>
    <property type="match status" value="1"/>
</dbReference>
<dbReference type="Pfam" id="PF00566">
    <property type="entry name" value="RabGAP-TBC"/>
    <property type="match status" value="1"/>
</dbReference>
<dbReference type="SMART" id="SM00462">
    <property type="entry name" value="PTB"/>
    <property type="match status" value="1"/>
</dbReference>
<dbReference type="SMART" id="SM00164">
    <property type="entry name" value="TBC"/>
    <property type="match status" value="1"/>
</dbReference>
<dbReference type="SUPFAM" id="SSF50729">
    <property type="entry name" value="PH domain-like"/>
    <property type="match status" value="1"/>
</dbReference>
<dbReference type="SUPFAM" id="SSF47923">
    <property type="entry name" value="Ypt/Rab-GAP domain of gyp1p"/>
    <property type="match status" value="2"/>
</dbReference>
<dbReference type="PROSITE" id="PS01179">
    <property type="entry name" value="PID"/>
    <property type="match status" value="1"/>
</dbReference>
<dbReference type="PROSITE" id="PS50086">
    <property type="entry name" value="TBC_RABGAP"/>
    <property type="match status" value="1"/>
</dbReference>
<organism>
    <name type="scientific">Homo sapiens</name>
    <name type="common">Human</name>
    <dbReference type="NCBI Taxonomy" id="9606"/>
    <lineage>
        <taxon>Eukaryota</taxon>
        <taxon>Metazoa</taxon>
        <taxon>Chordata</taxon>
        <taxon>Craniata</taxon>
        <taxon>Vertebrata</taxon>
        <taxon>Euteleostomi</taxon>
        <taxon>Mammalia</taxon>
        <taxon>Eutheria</taxon>
        <taxon>Euarchontoglires</taxon>
        <taxon>Primates</taxon>
        <taxon>Haplorrhini</taxon>
        <taxon>Catarrhini</taxon>
        <taxon>Hominidae</taxon>
        <taxon>Homo</taxon>
    </lineage>
</organism>